<dbReference type="EMBL" id="AM040264">
    <property type="protein sequence ID" value="CAJ11727.1"/>
    <property type="molecule type" value="Genomic_DNA"/>
</dbReference>
<dbReference type="RefSeq" id="WP_002964842.1">
    <property type="nucleotide sequence ID" value="NZ_KN046823.1"/>
</dbReference>
<dbReference type="SMR" id="Q2YLW7"/>
<dbReference type="STRING" id="359391.BAB1_1771"/>
<dbReference type="GeneID" id="93017891"/>
<dbReference type="KEGG" id="bmf:BAB1_1771"/>
<dbReference type="PATRIC" id="fig|359391.11.peg.282"/>
<dbReference type="HOGENOM" id="CLU_021838_5_3_5"/>
<dbReference type="PhylomeDB" id="Q2YLW7"/>
<dbReference type="Proteomes" id="UP000002719">
    <property type="component" value="Chromosome I"/>
</dbReference>
<dbReference type="GO" id="GO:0005886">
    <property type="term" value="C:plasma membrane"/>
    <property type="evidence" value="ECO:0007669"/>
    <property type="project" value="UniProtKB-SubCell"/>
</dbReference>
<dbReference type="GO" id="GO:0022857">
    <property type="term" value="F:transmembrane transporter activity"/>
    <property type="evidence" value="ECO:0007669"/>
    <property type="project" value="InterPro"/>
</dbReference>
<dbReference type="GO" id="GO:0015888">
    <property type="term" value="P:thiamine transport"/>
    <property type="evidence" value="ECO:0007669"/>
    <property type="project" value="InterPro"/>
</dbReference>
<dbReference type="CDD" id="cd06261">
    <property type="entry name" value="TM_PBP2"/>
    <property type="match status" value="2"/>
</dbReference>
<dbReference type="Gene3D" id="1.10.3720.10">
    <property type="entry name" value="MetI-like"/>
    <property type="match status" value="2"/>
</dbReference>
<dbReference type="InterPro" id="IPR000515">
    <property type="entry name" value="MetI-like"/>
</dbReference>
<dbReference type="InterPro" id="IPR035906">
    <property type="entry name" value="MetI-like_sf"/>
</dbReference>
<dbReference type="InterPro" id="IPR005947">
    <property type="entry name" value="ThiP_ABC_transpt"/>
</dbReference>
<dbReference type="NCBIfam" id="NF006956">
    <property type="entry name" value="PRK09433.2-5"/>
    <property type="match status" value="1"/>
</dbReference>
<dbReference type="NCBIfam" id="TIGR01253">
    <property type="entry name" value="thiP"/>
    <property type="match status" value="1"/>
</dbReference>
<dbReference type="PANTHER" id="PTHR30183">
    <property type="entry name" value="MOLYBDENUM TRANSPORT SYSTEM PERMEASE PROTEIN MODB"/>
    <property type="match status" value="1"/>
</dbReference>
<dbReference type="PANTHER" id="PTHR30183:SF9">
    <property type="entry name" value="THIAMINE TRANSPORT SYSTEM PERMEASE PROTEIN THIP"/>
    <property type="match status" value="1"/>
</dbReference>
<dbReference type="Pfam" id="PF00528">
    <property type="entry name" value="BPD_transp_1"/>
    <property type="match status" value="1"/>
</dbReference>
<dbReference type="SUPFAM" id="SSF161098">
    <property type="entry name" value="MetI-like"/>
    <property type="match status" value="2"/>
</dbReference>
<dbReference type="PROSITE" id="PS50928">
    <property type="entry name" value="ABC_TM1"/>
    <property type="match status" value="2"/>
</dbReference>
<name>THIP_BRUA2</name>
<proteinExistence type="inferred from homology"/>
<gene>
    <name type="primary">thiP</name>
    <name type="ordered locus">BAB1_1771</name>
</gene>
<evidence type="ECO:0000250" key="1">
    <source>
        <dbReference type="UniProtKB" id="P31549"/>
    </source>
</evidence>
<evidence type="ECO:0000250" key="2">
    <source>
        <dbReference type="UniProtKB" id="Q8ZRV1"/>
    </source>
</evidence>
<evidence type="ECO:0000255" key="3"/>
<evidence type="ECO:0000255" key="4">
    <source>
        <dbReference type="PROSITE-ProRule" id="PRU00441"/>
    </source>
</evidence>
<evidence type="ECO:0000305" key="5"/>
<feature type="chain" id="PRO_0000282908" description="Thiamine transport system permease protein ThiP">
    <location>
        <begin position="1"/>
        <end position="543"/>
    </location>
</feature>
<feature type="transmembrane region" description="Helical" evidence="4">
    <location>
        <begin position="19"/>
        <end position="39"/>
    </location>
</feature>
<feature type="transmembrane region" description="Helical" evidence="4">
    <location>
        <begin position="64"/>
        <end position="84"/>
    </location>
</feature>
<feature type="transmembrane region" description="Helical" evidence="4">
    <location>
        <begin position="102"/>
        <end position="122"/>
    </location>
</feature>
<feature type="transmembrane region" description="Helical" evidence="4">
    <location>
        <begin position="142"/>
        <end position="162"/>
    </location>
</feature>
<feature type="transmembrane region" description="Helical" evidence="4">
    <location>
        <begin position="205"/>
        <end position="225"/>
    </location>
</feature>
<feature type="transmembrane region" description="Helical" evidence="4">
    <location>
        <begin position="250"/>
        <end position="270"/>
    </location>
</feature>
<feature type="transmembrane region" description="Helical" evidence="4">
    <location>
        <begin position="300"/>
        <end position="320"/>
    </location>
</feature>
<feature type="transmembrane region" description="Helical" evidence="4">
    <location>
        <begin position="343"/>
        <end position="363"/>
    </location>
</feature>
<feature type="transmembrane region" description="Helical" evidence="4">
    <location>
        <begin position="379"/>
        <end position="399"/>
    </location>
</feature>
<feature type="transmembrane region" description="Helical" evidence="4">
    <location>
        <begin position="406"/>
        <end position="426"/>
    </location>
</feature>
<feature type="transmembrane region" description="Helical" evidence="4">
    <location>
        <begin position="468"/>
        <end position="488"/>
    </location>
</feature>
<feature type="transmembrane region" description="Helical" evidence="4">
    <location>
        <begin position="510"/>
        <end position="530"/>
    </location>
</feature>
<feature type="domain" description="ABC transmembrane type-1 1" evidence="4">
    <location>
        <begin position="62"/>
        <end position="266"/>
    </location>
</feature>
<feature type="domain" description="ABC transmembrane type-1 2" evidence="4">
    <location>
        <begin position="339"/>
        <end position="530"/>
    </location>
</feature>
<protein>
    <recommendedName>
        <fullName>Thiamine transport system permease protein ThiP</fullName>
    </recommendedName>
</protein>
<keyword id="KW-0997">Cell inner membrane</keyword>
<keyword id="KW-1003">Cell membrane</keyword>
<keyword id="KW-0472">Membrane</keyword>
<keyword id="KW-1185">Reference proteome</keyword>
<keyword id="KW-0677">Repeat</keyword>
<keyword id="KW-0812">Transmembrane</keyword>
<keyword id="KW-1133">Transmembrane helix</keyword>
<keyword id="KW-0813">Transport</keyword>
<comment type="function">
    <text evidence="2">Part of the ABC transporter complex ThiBPQ involved in thiamine import. Probably responsible for the translocation of the substrate across the membrane.</text>
</comment>
<comment type="subunit">
    <text evidence="2">The complex is composed of two ATP-binding proteins (ThiQ), two transmembrane proteins (ThiP) and a solute-binding protein (ThiB).</text>
</comment>
<comment type="subcellular location">
    <subcellularLocation>
        <location evidence="1">Cell inner membrane</location>
        <topology evidence="3">Multi-pass membrane protein</topology>
    </subcellularLocation>
</comment>
<comment type="similarity">
    <text evidence="5">Belongs to the binding-protein-dependent transport system permease family. CysTW subfamily.</text>
</comment>
<accession>Q2YLW7</accession>
<organism>
    <name type="scientific">Brucella abortus (strain 2308)</name>
    <dbReference type="NCBI Taxonomy" id="359391"/>
    <lineage>
        <taxon>Bacteria</taxon>
        <taxon>Pseudomonadati</taxon>
        <taxon>Pseudomonadota</taxon>
        <taxon>Alphaproteobacteria</taxon>
        <taxon>Hyphomicrobiales</taxon>
        <taxon>Brucellaceae</taxon>
        <taxon>Brucella/Ochrobactrum group</taxon>
        <taxon>Brucella</taxon>
    </lineage>
</organism>
<reference key="1">
    <citation type="journal article" date="2005" name="Infect. Immun.">
        <title>Whole-genome analyses of speciation events in pathogenic Brucellae.</title>
        <authorList>
            <person name="Chain P.S."/>
            <person name="Comerci D.J."/>
            <person name="Tolmasky M.E."/>
            <person name="Larimer F.W."/>
            <person name="Malfatti S.A."/>
            <person name="Vergez L.M."/>
            <person name="Aguero F."/>
            <person name="Land M.L."/>
            <person name="Ugalde R.A."/>
            <person name="Garcia E."/>
        </authorList>
    </citation>
    <scope>NUCLEOTIDE SEQUENCE [LARGE SCALE GENOMIC DNA]</scope>
    <source>
        <strain>2308</strain>
    </source>
</reference>
<sequence length="543" mass="58302">MTATPARRTSLASPATKPVAGGLALAFLATLAGGALLALALEAGGGGFDAAANFDTYLWRVARFTIWQAVASSLLSVLFAIPIARALYAEARFPGRGLILRLFALPLALPALVAVLGVTSIYGRNGLIAHISDMLGHPMQPDIYGIAGILIAHIFFNMPLAVRLLLAAYESIPDDHWKLAAQLGMGSRARFRLIEWPVIRRSLPGMIGLVFMLCVTSFTTVLTLGGGPRATTLEVAIYQSLHFDFDPARAVALTFTQLALTLLILLILRLTGRPSEEGFTQTATPRRYGSPRKTERLFNIIVIALGFLYVALPIAGVVVSGLTADLVRLLSERIVWHAIATSLALGFSAALLAVFLSLALVAAREATRNARIANIFDTGASLILVMPPIVIGAGWFILLRHFTDPFVMAPLMVVTVNAAMAMPFAVRLLRPAWDTAASRHNKLCSQLGIKGFNRLRLIDWPSIRRPCGMAFAFAMALSLGDLGTIALFGSDALVTLPYLLLQRMGSYRTFDAAGLALILGVLCLALMMIADRAAASRKEAFLQ</sequence>